<dbReference type="EC" id="1.5.1.5" evidence="1"/>
<dbReference type="EC" id="3.5.4.9" evidence="1"/>
<dbReference type="EMBL" id="M74789">
    <property type="protein sequence ID" value="AAA23803.1"/>
    <property type="molecule type" value="Genomic_DNA"/>
</dbReference>
<dbReference type="EMBL" id="D10588">
    <property type="protein sequence ID" value="BAA01445.1"/>
    <property type="molecule type" value="Genomic_DNA"/>
</dbReference>
<dbReference type="EMBL" id="U82664">
    <property type="protein sequence ID" value="AAB40282.1"/>
    <property type="molecule type" value="Genomic_DNA"/>
</dbReference>
<dbReference type="EMBL" id="U00096">
    <property type="protein sequence ID" value="AAC73631.1"/>
    <property type="molecule type" value="Genomic_DNA"/>
</dbReference>
<dbReference type="EMBL" id="AP009048">
    <property type="protein sequence ID" value="BAE76306.1"/>
    <property type="molecule type" value="Genomic_DNA"/>
</dbReference>
<dbReference type="PIR" id="H64784">
    <property type="entry name" value="JS0662"/>
</dbReference>
<dbReference type="RefSeq" id="NP_415062.1">
    <property type="nucleotide sequence ID" value="NC_000913.3"/>
</dbReference>
<dbReference type="RefSeq" id="WP_000729160.1">
    <property type="nucleotide sequence ID" value="NZ_STEB01000007.1"/>
</dbReference>
<dbReference type="PDB" id="1B0A">
    <property type="method" value="X-ray"/>
    <property type="resolution" value="2.56 A"/>
    <property type="chains" value="A=1-288"/>
</dbReference>
<dbReference type="PDB" id="5O22">
    <property type="method" value="X-ray"/>
    <property type="resolution" value="2.10 A"/>
    <property type="chains" value="A/B/C/D=2-288"/>
</dbReference>
<dbReference type="PDB" id="5O28">
    <property type="method" value="X-ray"/>
    <property type="resolution" value="1.89 A"/>
    <property type="chains" value="A/B/C/D=2-288"/>
</dbReference>
<dbReference type="PDB" id="5O2A">
    <property type="method" value="X-ray"/>
    <property type="resolution" value="1.90 A"/>
    <property type="chains" value="A/B/C/D=2-288"/>
</dbReference>
<dbReference type="PDBsum" id="1B0A"/>
<dbReference type="PDBsum" id="5O22"/>
<dbReference type="PDBsum" id="5O28"/>
<dbReference type="PDBsum" id="5O2A"/>
<dbReference type="SMR" id="P24186"/>
<dbReference type="BioGRID" id="4262819">
    <property type="interactions" value="302"/>
</dbReference>
<dbReference type="DIP" id="DIP-9675N"/>
<dbReference type="FunCoup" id="P24186">
    <property type="interactions" value="770"/>
</dbReference>
<dbReference type="IntAct" id="P24186">
    <property type="interactions" value="4"/>
</dbReference>
<dbReference type="STRING" id="511145.b0529"/>
<dbReference type="jPOST" id="P24186"/>
<dbReference type="PaxDb" id="511145-b0529"/>
<dbReference type="EnsemblBacteria" id="AAC73631">
    <property type="protein sequence ID" value="AAC73631"/>
    <property type="gene ID" value="b0529"/>
</dbReference>
<dbReference type="GeneID" id="945221"/>
<dbReference type="KEGG" id="ecj:JW0518"/>
<dbReference type="KEGG" id="eco:b0529"/>
<dbReference type="KEGG" id="ecoc:C3026_02595"/>
<dbReference type="PATRIC" id="fig|1411691.4.peg.1749"/>
<dbReference type="EchoBASE" id="EB0324"/>
<dbReference type="eggNOG" id="COG0190">
    <property type="taxonomic scope" value="Bacteria"/>
</dbReference>
<dbReference type="HOGENOM" id="CLU_034045_2_1_6"/>
<dbReference type="InParanoid" id="P24186"/>
<dbReference type="OMA" id="VCHILTK"/>
<dbReference type="OrthoDB" id="9803580at2"/>
<dbReference type="PhylomeDB" id="P24186"/>
<dbReference type="BioCyc" id="EcoCyc:FOLD-MONOMER"/>
<dbReference type="BioCyc" id="MetaCyc:FOLD-MONOMER"/>
<dbReference type="BRENDA" id="1.5.1.5">
    <property type="organism ID" value="2026"/>
</dbReference>
<dbReference type="BRENDA" id="3.5.4.9">
    <property type="organism ID" value="2026"/>
</dbReference>
<dbReference type="SABIO-RK" id="P24186"/>
<dbReference type="UniPathway" id="UPA00193"/>
<dbReference type="EvolutionaryTrace" id="P24186"/>
<dbReference type="PRO" id="PR:P24186"/>
<dbReference type="Proteomes" id="UP000000625">
    <property type="component" value="Chromosome"/>
</dbReference>
<dbReference type="GO" id="GO:0005829">
    <property type="term" value="C:cytosol"/>
    <property type="evidence" value="ECO:0000314"/>
    <property type="project" value="EcoCyc"/>
</dbReference>
<dbReference type="GO" id="GO:0004477">
    <property type="term" value="F:methenyltetrahydrofolate cyclohydrolase activity"/>
    <property type="evidence" value="ECO:0000314"/>
    <property type="project" value="EcoCyc"/>
</dbReference>
<dbReference type="GO" id="GO:0004488">
    <property type="term" value="F:methylenetetrahydrofolate dehydrogenase (NADP+) activity"/>
    <property type="evidence" value="ECO:0000314"/>
    <property type="project" value="EcoCyc"/>
</dbReference>
<dbReference type="GO" id="GO:0042803">
    <property type="term" value="F:protein homodimerization activity"/>
    <property type="evidence" value="ECO:0000314"/>
    <property type="project" value="EcoCyc"/>
</dbReference>
<dbReference type="GO" id="GO:0000105">
    <property type="term" value="P:L-histidine biosynthetic process"/>
    <property type="evidence" value="ECO:0007669"/>
    <property type="project" value="UniProtKB-KW"/>
</dbReference>
<dbReference type="GO" id="GO:0009086">
    <property type="term" value="P:methionine biosynthetic process"/>
    <property type="evidence" value="ECO:0000315"/>
    <property type="project" value="EcoCyc"/>
</dbReference>
<dbReference type="GO" id="GO:0006164">
    <property type="term" value="P:purine nucleotide biosynthetic process"/>
    <property type="evidence" value="ECO:0007669"/>
    <property type="project" value="UniProtKB-KW"/>
</dbReference>
<dbReference type="GO" id="GO:0035999">
    <property type="term" value="P:tetrahydrofolate interconversion"/>
    <property type="evidence" value="ECO:0000318"/>
    <property type="project" value="GO_Central"/>
</dbReference>
<dbReference type="CDD" id="cd01080">
    <property type="entry name" value="NAD_bind_m-THF_DH_Cyclohyd"/>
    <property type="match status" value="1"/>
</dbReference>
<dbReference type="FunFam" id="3.40.50.10860:FF:000001">
    <property type="entry name" value="Bifunctional protein FolD"/>
    <property type="match status" value="1"/>
</dbReference>
<dbReference type="FunFam" id="3.40.50.720:FF:000006">
    <property type="entry name" value="Bifunctional protein FolD"/>
    <property type="match status" value="1"/>
</dbReference>
<dbReference type="Gene3D" id="3.40.50.10860">
    <property type="entry name" value="Leucine Dehydrogenase, chain A, domain 1"/>
    <property type="match status" value="1"/>
</dbReference>
<dbReference type="Gene3D" id="3.40.50.720">
    <property type="entry name" value="NAD(P)-binding Rossmann-like Domain"/>
    <property type="match status" value="1"/>
</dbReference>
<dbReference type="HAMAP" id="MF_01576">
    <property type="entry name" value="THF_DHG_CYH"/>
    <property type="match status" value="1"/>
</dbReference>
<dbReference type="InterPro" id="IPR046346">
    <property type="entry name" value="Aminoacid_DH-like_N_sf"/>
</dbReference>
<dbReference type="InterPro" id="IPR036291">
    <property type="entry name" value="NAD(P)-bd_dom_sf"/>
</dbReference>
<dbReference type="InterPro" id="IPR000672">
    <property type="entry name" value="THF_DH/CycHdrlase"/>
</dbReference>
<dbReference type="InterPro" id="IPR020630">
    <property type="entry name" value="THF_DH/CycHdrlase_cat_dom"/>
</dbReference>
<dbReference type="InterPro" id="IPR020867">
    <property type="entry name" value="THF_DH/CycHdrlase_CS"/>
</dbReference>
<dbReference type="InterPro" id="IPR020631">
    <property type="entry name" value="THF_DH/CycHdrlase_NAD-bd_dom"/>
</dbReference>
<dbReference type="NCBIfam" id="NF008058">
    <property type="entry name" value="PRK10792.1"/>
    <property type="match status" value="1"/>
</dbReference>
<dbReference type="NCBIfam" id="NF010783">
    <property type="entry name" value="PRK14186.1"/>
    <property type="match status" value="1"/>
</dbReference>
<dbReference type="PANTHER" id="PTHR48099:SF5">
    <property type="entry name" value="C-1-TETRAHYDROFOLATE SYNTHASE, CYTOPLASMIC"/>
    <property type="match status" value="1"/>
</dbReference>
<dbReference type="PANTHER" id="PTHR48099">
    <property type="entry name" value="C-1-TETRAHYDROFOLATE SYNTHASE, CYTOPLASMIC-RELATED"/>
    <property type="match status" value="1"/>
</dbReference>
<dbReference type="Pfam" id="PF00763">
    <property type="entry name" value="THF_DHG_CYH"/>
    <property type="match status" value="1"/>
</dbReference>
<dbReference type="Pfam" id="PF02882">
    <property type="entry name" value="THF_DHG_CYH_C"/>
    <property type="match status" value="1"/>
</dbReference>
<dbReference type="PRINTS" id="PR00085">
    <property type="entry name" value="THFDHDRGNASE"/>
</dbReference>
<dbReference type="SUPFAM" id="SSF53223">
    <property type="entry name" value="Aminoacid dehydrogenase-like, N-terminal domain"/>
    <property type="match status" value="1"/>
</dbReference>
<dbReference type="SUPFAM" id="SSF51735">
    <property type="entry name" value="NAD(P)-binding Rossmann-fold domains"/>
    <property type="match status" value="1"/>
</dbReference>
<dbReference type="PROSITE" id="PS00766">
    <property type="entry name" value="THF_DHG_CYH_1"/>
    <property type="match status" value="1"/>
</dbReference>
<dbReference type="PROSITE" id="PS00767">
    <property type="entry name" value="THF_DHG_CYH_2"/>
    <property type="match status" value="1"/>
</dbReference>
<gene>
    <name evidence="1" type="primary">folD</name>
    <name type="synonym">ads</name>
    <name type="ordered locus">b0529</name>
    <name type="ordered locus">JW0518</name>
</gene>
<sequence length="288" mass="31044">MAAKIIDGKTIAQQVRSEVAQKVQARIAAGLRAPGLAVVLVGSNPASQIYVASKRKACEEVGFVSRSYDLPETTSEAELLELIDTLNADNTIDGILVQLPLPAGIDNVKVLERIHPDKDVDGFHPYNVGRLCQRAPRLRPCTPRGIVTLLERYNIDTFGLNAVVIGASNIVGRPMSMELLLAGCTTTVTHRFTKNLRHHVENADLLIVAVGKPGFIPGDWIKEGAIVIDVGINRLENGKVVGDVVFEDAAKRASYITPVPGGVGPMTVATLIENTLQACVEYHDPQDE</sequence>
<protein>
    <recommendedName>
        <fullName evidence="1">Bifunctional protein FolD</fullName>
    </recommendedName>
    <domain>
        <recommendedName>
            <fullName evidence="1">Methylenetetrahydrofolate dehydrogenase</fullName>
            <ecNumber evidence="1">1.5.1.5</ecNumber>
        </recommendedName>
    </domain>
    <domain>
        <recommendedName>
            <fullName evidence="1">Methenyltetrahydrofolate cyclohydrolase</fullName>
            <ecNumber evidence="1">3.5.4.9</ecNumber>
        </recommendedName>
    </domain>
</protein>
<reference key="1">
    <citation type="journal article" date="1991" name="J. Biol. Chem.">
        <title>Purification, characterization, cloning, and amino acid sequence of the bifunctional enzyme 5,10-methylenetetrahydrofolate dehydrogenase/5,10-methenyltetrahydrofolate cyclohydrolase from Escherichia coli.</title>
        <authorList>
            <person name="D'Ari L."/>
            <person name="Rabinowitz J.C."/>
        </authorList>
    </citation>
    <scope>NUCLEOTIDE SEQUENCE [GENOMIC DNA]</scope>
    <scope>PROTEIN SEQUENCE OF 2-36</scope>
    <scope>FUNCTION</scope>
    <scope>SUBUNIT</scope>
</reference>
<reference key="2">
    <citation type="submission" date="1992-07" db="EMBL/GenBank/DDBJ databases">
        <title>Cloning and nucleotide sequence analysis of a novel adenine-sensitive mutation of Escherichia coli strain K-12 W3110.</title>
        <authorList>
            <person name="Yonetani Y."/>
            <person name="Sanpei G."/>
            <person name="Mizobuchi K."/>
        </authorList>
    </citation>
    <scope>NUCLEOTIDE SEQUENCE [GENOMIC DNA]</scope>
    <source>
        <strain>K12 / W3110 / ATCC 27325 / DSM 5911</strain>
    </source>
</reference>
<reference key="3">
    <citation type="submission" date="1997-01" db="EMBL/GenBank/DDBJ databases">
        <title>Sequence of minutes 4-25 of Escherichia coli.</title>
        <authorList>
            <person name="Chung E."/>
            <person name="Allen E."/>
            <person name="Araujo R."/>
            <person name="Aparicio A.M."/>
            <person name="Davis K."/>
            <person name="Duncan M."/>
            <person name="Federspiel N."/>
            <person name="Hyman R."/>
            <person name="Kalman S."/>
            <person name="Komp C."/>
            <person name="Kurdi O."/>
            <person name="Lew H."/>
            <person name="Lin D."/>
            <person name="Namath A."/>
            <person name="Oefner P."/>
            <person name="Roberts D."/>
            <person name="Schramm S."/>
            <person name="Davis R.W."/>
        </authorList>
    </citation>
    <scope>NUCLEOTIDE SEQUENCE [LARGE SCALE GENOMIC DNA]</scope>
    <source>
        <strain>K12 / MG1655 / ATCC 47076</strain>
    </source>
</reference>
<reference key="4">
    <citation type="journal article" date="1997" name="Science">
        <title>The complete genome sequence of Escherichia coli K-12.</title>
        <authorList>
            <person name="Blattner F.R."/>
            <person name="Plunkett G. III"/>
            <person name="Bloch C.A."/>
            <person name="Perna N.T."/>
            <person name="Burland V."/>
            <person name="Riley M."/>
            <person name="Collado-Vides J."/>
            <person name="Glasner J.D."/>
            <person name="Rode C.K."/>
            <person name="Mayhew G.F."/>
            <person name="Gregor J."/>
            <person name="Davis N.W."/>
            <person name="Kirkpatrick H.A."/>
            <person name="Goeden M.A."/>
            <person name="Rose D.J."/>
            <person name="Mau B."/>
            <person name="Shao Y."/>
        </authorList>
    </citation>
    <scope>NUCLEOTIDE SEQUENCE [LARGE SCALE GENOMIC DNA]</scope>
    <source>
        <strain>K12 / MG1655 / ATCC 47076</strain>
    </source>
</reference>
<reference key="5">
    <citation type="journal article" date="2006" name="Mol. Syst. Biol.">
        <title>Highly accurate genome sequences of Escherichia coli K-12 strains MG1655 and W3110.</title>
        <authorList>
            <person name="Hayashi K."/>
            <person name="Morooka N."/>
            <person name="Yamamoto Y."/>
            <person name="Fujita K."/>
            <person name="Isono K."/>
            <person name="Choi S."/>
            <person name="Ohtsubo E."/>
            <person name="Baba T."/>
            <person name="Wanner B.L."/>
            <person name="Mori H."/>
            <person name="Horiuchi T."/>
        </authorList>
    </citation>
    <scope>NUCLEOTIDE SEQUENCE [LARGE SCALE GENOMIC DNA]</scope>
    <source>
        <strain>K12 / W3110 / ATCC 27325 / DSM 5911</strain>
    </source>
</reference>
<reference key="6">
    <citation type="journal article" date="1999" name="Protein Sci.">
        <title>The crystal structure of a bacterial, bifunctional 5,10 methylene-tetrahydrofolate dehydrogenase/cyclohydrolase.</title>
        <authorList>
            <person name="Shen B.W."/>
            <person name="Dyer D.H."/>
            <person name="Huang J.-Y."/>
            <person name="D'Ari L."/>
            <person name="Rabinowitz J."/>
            <person name="Stoddard B.L."/>
        </authorList>
    </citation>
    <scope>X-RAY CRYSTALLOGRAPHY (2.56 ANGSTROMS)</scope>
    <scope>SUBUNIT</scope>
</reference>
<feature type="initiator methionine" description="Removed" evidence="3">
    <location>
        <position position="1"/>
    </location>
</feature>
<feature type="chain" id="PRO_0000199306" description="Bifunctional protein FolD">
    <location>
        <begin position="2"/>
        <end position="288"/>
    </location>
</feature>
<feature type="binding site" evidence="1">
    <location>
        <begin position="166"/>
        <end position="168"/>
    </location>
    <ligand>
        <name>NADP(+)</name>
        <dbReference type="ChEBI" id="CHEBI:58349"/>
    </ligand>
</feature>
<feature type="binding site" evidence="1">
    <location>
        <position position="232"/>
    </location>
    <ligand>
        <name>NADP(+)</name>
        <dbReference type="ChEBI" id="CHEBI:58349"/>
    </ligand>
</feature>
<feature type="sequence conflict" description="In Ref. 3; AAB40282." evidence="4" ref="3">
    <original>S</original>
    <variation>L</variation>
    <location>
        <position position="47"/>
    </location>
</feature>
<feature type="sequence conflict" description="In Ref. 1; AAA23803." evidence="4" ref="1">
    <original>V</original>
    <variation>L</variation>
    <location>
        <position position="200"/>
    </location>
</feature>
<feature type="helix" evidence="5">
    <location>
        <begin position="8"/>
        <end position="21"/>
    </location>
</feature>
<feature type="helix" evidence="5">
    <location>
        <begin position="24"/>
        <end position="28"/>
    </location>
</feature>
<feature type="strand" evidence="5">
    <location>
        <begin position="35"/>
        <end position="42"/>
    </location>
</feature>
<feature type="helix" evidence="5">
    <location>
        <begin position="45"/>
        <end position="60"/>
    </location>
</feature>
<feature type="strand" evidence="5">
    <location>
        <begin position="64"/>
        <end position="70"/>
    </location>
</feature>
<feature type="helix" evidence="5">
    <location>
        <begin position="76"/>
        <end position="88"/>
    </location>
</feature>
<feature type="strand" evidence="5">
    <location>
        <begin position="94"/>
        <end position="97"/>
    </location>
</feature>
<feature type="helix" evidence="5">
    <location>
        <begin position="107"/>
        <end position="113"/>
    </location>
</feature>
<feature type="helix" evidence="5">
    <location>
        <begin position="116"/>
        <end position="118"/>
    </location>
</feature>
<feature type="helix" evidence="5">
    <location>
        <begin position="125"/>
        <end position="132"/>
    </location>
</feature>
<feature type="helix" evidence="5">
    <location>
        <begin position="141"/>
        <end position="152"/>
    </location>
</feature>
<feature type="strand" evidence="5">
    <location>
        <begin position="161"/>
        <end position="165"/>
    </location>
</feature>
<feature type="turn" evidence="5">
    <location>
        <begin position="169"/>
        <end position="171"/>
    </location>
</feature>
<feature type="helix" evidence="5">
    <location>
        <begin position="172"/>
        <end position="181"/>
    </location>
</feature>
<feature type="strand" evidence="5">
    <location>
        <begin position="185"/>
        <end position="189"/>
    </location>
</feature>
<feature type="helix" evidence="5">
    <location>
        <begin position="196"/>
        <end position="201"/>
    </location>
</feature>
<feature type="strand" evidence="5">
    <location>
        <begin position="204"/>
        <end position="208"/>
    </location>
</feature>
<feature type="helix" evidence="5">
    <location>
        <begin position="218"/>
        <end position="220"/>
    </location>
</feature>
<feature type="strand" evidence="5">
    <location>
        <begin position="226"/>
        <end position="229"/>
    </location>
</feature>
<feature type="strand" evidence="5">
    <location>
        <begin position="238"/>
        <end position="241"/>
    </location>
</feature>
<feature type="helix" evidence="5">
    <location>
        <begin position="246"/>
        <end position="250"/>
    </location>
</feature>
<feature type="strand" evidence="5">
    <location>
        <begin position="254"/>
        <end position="256"/>
    </location>
</feature>
<feature type="strand" evidence="5">
    <location>
        <begin position="259"/>
        <end position="263"/>
    </location>
</feature>
<feature type="helix" evidence="5">
    <location>
        <begin position="264"/>
        <end position="282"/>
    </location>
</feature>
<organism>
    <name type="scientific">Escherichia coli (strain K12)</name>
    <dbReference type="NCBI Taxonomy" id="83333"/>
    <lineage>
        <taxon>Bacteria</taxon>
        <taxon>Pseudomonadati</taxon>
        <taxon>Pseudomonadota</taxon>
        <taxon>Gammaproteobacteria</taxon>
        <taxon>Enterobacterales</taxon>
        <taxon>Enterobacteriaceae</taxon>
        <taxon>Escherichia</taxon>
    </lineage>
</organism>
<name>FOLD_ECOLI</name>
<evidence type="ECO:0000255" key="1">
    <source>
        <dbReference type="HAMAP-Rule" id="MF_01576"/>
    </source>
</evidence>
<evidence type="ECO:0000269" key="2">
    <source>
    </source>
</evidence>
<evidence type="ECO:0000269" key="3">
    <source>
    </source>
</evidence>
<evidence type="ECO:0000305" key="4"/>
<evidence type="ECO:0007829" key="5">
    <source>
        <dbReference type="PDB" id="5O28"/>
    </source>
</evidence>
<accession>P24186</accession>
<accession>P77132</accession>
<accession>Q2MBQ0</accession>
<proteinExistence type="evidence at protein level"/>
<comment type="function">
    <text evidence="1 3">Catalyzes the oxidation of 5,10-methylenetetrahydrofolate to 5,10-methenyltetrahydrofolate and then the hydrolysis of 5,10-methenyltetrahydrofolate to 10-formyltetrahydrofolate. This enzyme is specific for NADP.</text>
</comment>
<comment type="catalytic activity">
    <reaction evidence="1">
        <text>(6R)-5,10-methylene-5,6,7,8-tetrahydrofolate + NADP(+) = (6R)-5,10-methenyltetrahydrofolate + NADPH</text>
        <dbReference type="Rhea" id="RHEA:22812"/>
        <dbReference type="ChEBI" id="CHEBI:15636"/>
        <dbReference type="ChEBI" id="CHEBI:57455"/>
        <dbReference type="ChEBI" id="CHEBI:57783"/>
        <dbReference type="ChEBI" id="CHEBI:58349"/>
        <dbReference type="EC" id="1.5.1.5"/>
    </reaction>
</comment>
<comment type="catalytic activity">
    <reaction evidence="1">
        <text>(6R)-5,10-methenyltetrahydrofolate + H2O = (6R)-10-formyltetrahydrofolate + H(+)</text>
        <dbReference type="Rhea" id="RHEA:23700"/>
        <dbReference type="ChEBI" id="CHEBI:15377"/>
        <dbReference type="ChEBI" id="CHEBI:15378"/>
        <dbReference type="ChEBI" id="CHEBI:57455"/>
        <dbReference type="ChEBI" id="CHEBI:195366"/>
        <dbReference type="EC" id="3.5.4.9"/>
    </reaction>
</comment>
<comment type="pathway">
    <text evidence="1">One-carbon metabolism; tetrahydrofolate interconversion.</text>
</comment>
<comment type="subunit">
    <text evidence="1 2 3">Homodimer.</text>
</comment>
<comment type="similarity">
    <text evidence="1">Belongs to the tetrahydrofolate dehydrogenase/cyclohydrolase family.</text>
</comment>
<keyword id="KW-0002">3D-structure</keyword>
<keyword id="KW-0028">Amino-acid biosynthesis</keyword>
<keyword id="KW-0903">Direct protein sequencing</keyword>
<keyword id="KW-0368">Histidine biosynthesis</keyword>
<keyword id="KW-0378">Hydrolase</keyword>
<keyword id="KW-0486">Methionine biosynthesis</keyword>
<keyword id="KW-0511">Multifunctional enzyme</keyword>
<keyword id="KW-0521">NADP</keyword>
<keyword id="KW-0554">One-carbon metabolism</keyword>
<keyword id="KW-0560">Oxidoreductase</keyword>
<keyword id="KW-0658">Purine biosynthesis</keyword>
<keyword id="KW-1185">Reference proteome</keyword>